<comment type="function">
    <text evidence="1">Has nucleoside phosphatase activity towards nucleoside triphosphates and nucleoside diphosphates.</text>
</comment>
<comment type="catalytic activity">
    <reaction evidence="1">
        <text>a ribonucleoside 5'-triphosphate + H2O = a ribonucleoside 5'-diphosphate + phosphate + H(+)</text>
        <dbReference type="Rhea" id="RHEA:23680"/>
        <dbReference type="ChEBI" id="CHEBI:15377"/>
        <dbReference type="ChEBI" id="CHEBI:15378"/>
        <dbReference type="ChEBI" id="CHEBI:43474"/>
        <dbReference type="ChEBI" id="CHEBI:57930"/>
        <dbReference type="ChEBI" id="CHEBI:61557"/>
        <dbReference type="EC" id="3.6.1.15"/>
    </reaction>
</comment>
<comment type="catalytic activity">
    <reaction evidence="1">
        <text>a ribonucleoside 5'-diphosphate + H2O = a ribonucleoside 5'-phosphate + phosphate + H(+)</text>
        <dbReference type="Rhea" id="RHEA:36799"/>
        <dbReference type="ChEBI" id="CHEBI:15377"/>
        <dbReference type="ChEBI" id="CHEBI:15378"/>
        <dbReference type="ChEBI" id="CHEBI:43474"/>
        <dbReference type="ChEBI" id="CHEBI:57930"/>
        <dbReference type="ChEBI" id="CHEBI:58043"/>
        <dbReference type="EC" id="3.6.1.6"/>
    </reaction>
</comment>
<comment type="cofactor">
    <cofactor evidence="1">
        <name>Mg(2+)</name>
        <dbReference type="ChEBI" id="CHEBI:18420"/>
    </cofactor>
</comment>
<comment type="similarity">
    <text evidence="1">Belongs to the Ntdp family.</text>
</comment>
<feature type="chain" id="PRO_0000248100" description="Nucleoside triphosphate/diphosphate phosphatase">
    <location>
        <begin position="1"/>
        <end position="175"/>
    </location>
</feature>
<feature type="active site" description="Proton donor" evidence="1">
    <location>
        <position position="23"/>
    </location>
</feature>
<feature type="binding site" evidence="1">
    <location>
        <position position="87"/>
    </location>
    <ligand>
        <name>Mg(2+)</name>
        <dbReference type="ChEBI" id="CHEBI:18420"/>
        <label>1</label>
    </ligand>
</feature>
<feature type="binding site" evidence="1">
    <location>
        <position position="103"/>
    </location>
    <ligand>
        <name>Mg(2+)</name>
        <dbReference type="ChEBI" id="CHEBI:18420"/>
        <label>1</label>
    </ligand>
</feature>
<feature type="binding site" evidence="1">
    <location>
        <position position="105"/>
    </location>
    <ligand>
        <name>Mg(2+)</name>
        <dbReference type="ChEBI" id="CHEBI:18420"/>
        <label>2</label>
    </ligand>
</feature>
<feature type="binding site" evidence="1">
    <location>
        <position position="107"/>
    </location>
    <ligand>
        <name>Mg(2+)</name>
        <dbReference type="ChEBI" id="CHEBI:18420"/>
        <label>1</label>
    </ligand>
</feature>
<feature type="binding site" evidence="1">
    <location>
        <position position="107"/>
    </location>
    <ligand>
        <name>Mg(2+)</name>
        <dbReference type="ChEBI" id="CHEBI:18420"/>
        <label>2</label>
    </ligand>
</feature>
<feature type="binding site" evidence="1">
    <location>
        <position position="120"/>
    </location>
    <ligand>
        <name>Mg(2+)</name>
        <dbReference type="ChEBI" id="CHEBI:18420"/>
        <label>2</label>
    </ligand>
</feature>
<feature type="binding site" evidence="1">
    <location>
        <position position="123"/>
    </location>
    <ligand>
        <name>Mg(2+)</name>
        <dbReference type="ChEBI" id="CHEBI:18420"/>
        <label>2</label>
    </ligand>
</feature>
<keyword id="KW-0378">Hydrolase</keyword>
<keyword id="KW-0460">Magnesium</keyword>
<keyword id="KW-0479">Metal-binding</keyword>
<accession>Q92AX3</accession>
<gene>
    <name type="ordered locus">lin1795</name>
</gene>
<dbReference type="EC" id="3.6.1.15" evidence="1"/>
<dbReference type="EC" id="3.6.1.6" evidence="1"/>
<dbReference type="EMBL" id="AL596170">
    <property type="protein sequence ID" value="CAC97026.1"/>
    <property type="molecule type" value="Genomic_DNA"/>
</dbReference>
<dbReference type="PIR" id="AB1657">
    <property type="entry name" value="AB1657"/>
</dbReference>
<dbReference type="RefSeq" id="WP_003719986.1">
    <property type="nucleotide sequence ID" value="NC_003212.1"/>
</dbReference>
<dbReference type="SMR" id="Q92AX3"/>
<dbReference type="STRING" id="272626.gene:17566150"/>
<dbReference type="KEGG" id="lin:lin1795"/>
<dbReference type="eggNOG" id="COG3557">
    <property type="taxonomic scope" value="Bacteria"/>
</dbReference>
<dbReference type="HOGENOM" id="CLU_109787_1_0_9"/>
<dbReference type="OrthoDB" id="1645325at2"/>
<dbReference type="Proteomes" id="UP000002513">
    <property type="component" value="Chromosome"/>
</dbReference>
<dbReference type="GO" id="GO:0000287">
    <property type="term" value="F:magnesium ion binding"/>
    <property type="evidence" value="ECO:0007669"/>
    <property type="project" value="UniProtKB-UniRule"/>
</dbReference>
<dbReference type="GO" id="GO:0017110">
    <property type="term" value="F:nucleoside diphosphate phosphatase activity"/>
    <property type="evidence" value="ECO:0007669"/>
    <property type="project" value="UniProtKB-UniRule"/>
</dbReference>
<dbReference type="GO" id="GO:0017111">
    <property type="term" value="F:ribonucleoside triphosphate phosphatase activity"/>
    <property type="evidence" value="ECO:0007669"/>
    <property type="project" value="UniProtKB-UniRule"/>
</dbReference>
<dbReference type="Gene3D" id="2.40.380.10">
    <property type="entry name" value="FomD-like"/>
    <property type="match status" value="1"/>
</dbReference>
<dbReference type="HAMAP" id="MF_01568">
    <property type="entry name" value="Ntdp"/>
    <property type="match status" value="1"/>
</dbReference>
<dbReference type="InterPro" id="IPR007295">
    <property type="entry name" value="DUF402"/>
</dbReference>
<dbReference type="InterPro" id="IPR035930">
    <property type="entry name" value="FomD-like_sf"/>
</dbReference>
<dbReference type="InterPro" id="IPR050212">
    <property type="entry name" value="Ntdp-like"/>
</dbReference>
<dbReference type="InterPro" id="IPR016882">
    <property type="entry name" value="SA1684"/>
</dbReference>
<dbReference type="NCBIfam" id="NF010183">
    <property type="entry name" value="PRK13662.1"/>
    <property type="match status" value="1"/>
</dbReference>
<dbReference type="PANTHER" id="PTHR39159">
    <property type="match status" value="1"/>
</dbReference>
<dbReference type="PANTHER" id="PTHR39159:SF1">
    <property type="entry name" value="UPF0374 PROTEIN YGAC"/>
    <property type="match status" value="1"/>
</dbReference>
<dbReference type="Pfam" id="PF04167">
    <property type="entry name" value="DUF402"/>
    <property type="match status" value="1"/>
</dbReference>
<dbReference type="PIRSF" id="PIRSF028345">
    <property type="entry name" value="UCP028345"/>
    <property type="match status" value="1"/>
</dbReference>
<dbReference type="SUPFAM" id="SSF159234">
    <property type="entry name" value="FomD-like"/>
    <property type="match status" value="1"/>
</dbReference>
<reference key="1">
    <citation type="journal article" date="2001" name="Science">
        <title>Comparative genomics of Listeria species.</title>
        <authorList>
            <person name="Glaser P."/>
            <person name="Frangeul L."/>
            <person name="Buchrieser C."/>
            <person name="Rusniok C."/>
            <person name="Amend A."/>
            <person name="Baquero F."/>
            <person name="Berche P."/>
            <person name="Bloecker H."/>
            <person name="Brandt P."/>
            <person name="Chakraborty T."/>
            <person name="Charbit A."/>
            <person name="Chetouani F."/>
            <person name="Couve E."/>
            <person name="de Daruvar A."/>
            <person name="Dehoux P."/>
            <person name="Domann E."/>
            <person name="Dominguez-Bernal G."/>
            <person name="Duchaud E."/>
            <person name="Durant L."/>
            <person name="Dussurget O."/>
            <person name="Entian K.-D."/>
            <person name="Fsihi H."/>
            <person name="Garcia-del Portillo F."/>
            <person name="Garrido P."/>
            <person name="Gautier L."/>
            <person name="Goebel W."/>
            <person name="Gomez-Lopez N."/>
            <person name="Hain T."/>
            <person name="Hauf J."/>
            <person name="Jackson D."/>
            <person name="Jones L.-M."/>
            <person name="Kaerst U."/>
            <person name="Kreft J."/>
            <person name="Kuhn M."/>
            <person name="Kunst F."/>
            <person name="Kurapkat G."/>
            <person name="Madueno E."/>
            <person name="Maitournam A."/>
            <person name="Mata Vicente J."/>
            <person name="Ng E."/>
            <person name="Nedjari H."/>
            <person name="Nordsiek G."/>
            <person name="Novella S."/>
            <person name="de Pablos B."/>
            <person name="Perez-Diaz J.-C."/>
            <person name="Purcell R."/>
            <person name="Remmel B."/>
            <person name="Rose M."/>
            <person name="Schlueter T."/>
            <person name="Simoes N."/>
            <person name="Tierrez A."/>
            <person name="Vazquez-Boland J.-A."/>
            <person name="Voss H."/>
            <person name="Wehland J."/>
            <person name="Cossart P."/>
        </authorList>
    </citation>
    <scope>NUCLEOTIDE SEQUENCE [LARGE SCALE GENOMIC DNA]</scope>
    <source>
        <strain>ATCC BAA-680 / CLIP 11262</strain>
    </source>
</reference>
<evidence type="ECO:0000255" key="1">
    <source>
        <dbReference type="HAMAP-Rule" id="MF_01568"/>
    </source>
</evidence>
<sequence length="175" mass="21070">MYLPKEKEIIQIKSYKHNGKLHRTWKKTVVLKSTENIIIGGNDHTLVVEADGRKWVTREPSICYFHSDYWFNVISMIREDGIYHYCNLGTPFAVDEQALKYIDYDLDIKVFPDGRFHLLDEGEYEQHRRQMKYPDSIDRILKTNVDVLSHWILDKKGPFSPDYIDIWYEKYKEYR</sequence>
<proteinExistence type="inferred from homology"/>
<protein>
    <recommendedName>
        <fullName evidence="1">Nucleoside triphosphate/diphosphate phosphatase</fullName>
        <ecNumber evidence="1">3.6.1.15</ecNumber>
        <ecNumber evidence="1">3.6.1.6</ecNumber>
    </recommendedName>
</protein>
<name>NTDP_LISIN</name>
<organism>
    <name type="scientific">Listeria innocua serovar 6a (strain ATCC BAA-680 / CLIP 11262)</name>
    <dbReference type="NCBI Taxonomy" id="272626"/>
    <lineage>
        <taxon>Bacteria</taxon>
        <taxon>Bacillati</taxon>
        <taxon>Bacillota</taxon>
        <taxon>Bacilli</taxon>
        <taxon>Bacillales</taxon>
        <taxon>Listeriaceae</taxon>
        <taxon>Listeria</taxon>
    </lineage>
</organism>